<name>UVRC_NEIG1</name>
<evidence type="ECO:0000255" key="1">
    <source>
        <dbReference type="HAMAP-Rule" id="MF_00203"/>
    </source>
</evidence>
<evidence type="ECO:0000305" key="2"/>
<accession>Q5F928</accession>
<feature type="chain" id="PRO_0000227449" description="UvrABC system protein C">
    <location>
        <begin position="1"/>
        <end position="617"/>
    </location>
</feature>
<feature type="domain" description="GIY-YIG" evidence="1">
    <location>
        <begin position="22"/>
        <end position="100"/>
    </location>
</feature>
<feature type="domain" description="UVR" evidence="1">
    <location>
        <begin position="209"/>
        <end position="244"/>
    </location>
</feature>
<dbReference type="EMBL" id="AE004969">
    <property type="protein sequence ID" value="AAW89309.1"/>
    <property type="status" value="ALT_INIT"/>
    <property type="molecule type" value="Genomic_DNA"/>
</dbReference>
<dbReference type="RefSeq" id="YP_207721.1">
    <property type="nucleotide sequence ID" value="NC_002946.2"/>
</dbReference>
<dbReference type="SMR" id="Q5F928"/>
<dbReference type="STRING" id="242231.NGO_0578"/>
<dbReference type="KEGG" id="ngo:NGO_0578"/>
<dbReference type="PATRIC" id="fig|242231.10.peg.683"/>
<dbReference type="HOGENOM" id="CLU_014841_3_0_4"/>
<dbReference type="Proteomes" id="UP000000535">
    <property type="component" value="Chromosome"/>
</dbReference>
<dbReference type="GO" id="GO:0005737">
    <property type="term" value="C:cytoplasm"/>
    <property type="evidence" value="ECO:0007669"/>
    <property type="project" value="UniProtKB-SubCell"/>
</dbReference>
<dbReference type="GO" id="GO:0009380">
    <property type="term" value="C:excinuclease repair complex"/>
    <property type="evidence" value="ECO:0007669"/>
    <property type="project" value="InterPro"/>
</dbReference>
<dbReference type="GO" id="GO:0003677">
    <property type="term" value="F:DNA binding"/>
    <property type="evidence" value="ECO:0007669"/>
    <property type="project" value="UniProtKB-UniRule"/>
</dbReference>
<dbReference type="GO" id="GO:0009381">
    <property type="term" value="F:excinuclease ABC activity"/>
    <property type="evidence" value="ECO:0007669"/>
    <property type="project" value="UniProtKB-UniRule"/>
</dbReference>
<dbReference type="GO" id="GO:0006289">
    <property type="term" value="P:nucleotide-excision repair"/>
    <property type="evidence" value="ECO:0007669"/>
    <property type="project" value="UniProtKB-UniRule"/>
</dbReference>
<dbReference type="GO" id="GO:0009432">
    <property type="term" value="P:SOS response"/>
    <property type="evidence" value="ECO:0007669"/>
    <property type="project" value="UniProtKB-UniRule"/>
</dbReference>
<dbReference type="CDD" id="cd10434">
    <property type="entry name" value="GIY-YIG_UvrC_Cho"/>
    <property type="match status" value="1"/>
</dbReference>
<dbReference type="FunFam" id="1.10.150.20:FF:000005">
    <property type="entry name" value="UvrABC system protein C"/>
    <property type="match status" value="1"/>
</dbReference>
<dbReference type="FunFam" id="3.30.420.340:FF:000001">
    <property type="entry name" value="UvrABC system protein C"/>
    <property type="match status" value="1"/>
</dbReference>
<dbReference type="FunFam" id="3.40.1440.10:FF:000001">
    <property type="entry name" value="UvrABC system protein C"/>
    <property type="match status" value="1"/>
</dbReference>
<dbReference type="FunFam" id="4.10.860.10:FF:000002">
    <property type="entry name" value="UvrABC system protein C"/>
    <property type="match status" value="1"/>
</dbReference>
<dbReference type="Gene3D" id="1.10.150.20">
    <property type="entry name" value="5' to 3' exonuclease, C-terminal subdomain"/>
    <property type="match status" value="1"/>
</dbReference>
<dbReference type="Gene3D" id="3.40.1440.10">
    <property type="entry name" value="GIY-YIG endonuclease"/>
    <property type="match status" value="1"/>
</dbReference>
<dbReference type="Gene3D" id="4.10.860.10">
    <property type="entry name" value="UVR domain"/>
    <property type="match status" value="1"/>
</dbReference>
<dbReference type="Gene3D" id="3.30.420.340">
    <property type="entry name" value="UvrC, RNAse H endonuclease domain"/>
    <property type="match status" value="1"/>
</dbReference>
<dbReference type="HAMAP" id="MF_00203">
    <property type="entry name" value="UvrC"/>
    <property type="match status" value="1"/>
</dbReference>
<dbReference type="InterPro" id="IPR000305">
    <property type="entry name" value="GIY-YIG_endonuc"/>
</dbReference>
<dbReference type="InterPro" id="IPR035901">
    <property type="entry name" value="GIY-YIG_endonuc_sf"/>
</dbReference>
<dbReference type="InterPro" id="IPR047296">
    <property type="entry name" value="GIY-YIG_UvrC_Cho"/>
</dbReference>
<dbReference type="InterPro" id="IPR003583">
    <property type="entry name" value="Hlx-hairpin-Hlx_DNA-bd_motif"/>
</dbReference>
<dbReference type="InterPro" id="IPR010994">
    <property type="entry name" value="RuvA_2-like"/>
</dbReference>
<dbReference type="InterPro" id="IPR001943">
    <property type="entry name" value="UVR_dom"/>
</dbReference>
<dbReference type="InterPro" id="IPR036876">
    <property type="entry name" value="UVR_dom_sf"/>
</dbReference>
<dbReference type="InterPro" id="IPR050066">
    <property type="entry name" value="UvrABC_protein_C"/>
</dbReference>
<dbReference type="InterPro" id="IPR004791">
    <property type="entry name" value="UvrC"/>
</dbReference>
<dbReference type="InterPro" id="IPR001162">
    <property type="entry name" value="UvrC_RNase_H_dom"/>
</dbReference>
<dbReference type="InterPro" id="IPR038476">
    <property type="entry name" value="UvrC_RNase_H_dom_sf"/>
</dbReference>
<dbReference type="NCBIfam" id="NF001824">
    <property type="entry name" value="PRK00558.1-5"/>
    <property type="match status" value="1"/>
</dbReference>
<dbReference type="NCBIfam" id="TIGR00194">
    <property type="entry name" value="uvrC"/>
    <property type="match status" value="1"/>
</dbReference>
<dbReference type="PANTHER" id="PTHR30562:SF1">
    <property type="entry name" value="UVRABC SYSTEM PROTEIN C"/>
    <property type="match status" value="1"/>
</dbReference>
<dbReference type="PANTHER" id="PTHR30562">
    <property type="entry name" value="UVRC/OXIDOREDUCTASE"/>
    <property type="match status" value="1"/>
</dbReference>
<dbReference type="Pfam" id="PF01541">
    <property type="entry name" value="GIY-YIG"/>
    <property type="match status" value="1"/>
</dbReference>
<dbReference type="Pfam" id="PF14520">
    <property type="entry name" value="HHH_5"/>
    <property type="match status" value="1"/>
</dbReference>
<dbReference type="Pfam" id="PF02151">
    <property type="entry name" value="UVR"/>
    <property type="match status" value="1"/>
</dbReference>
<dbReference type="Pfam" id="PF22920">
    <property type="entry name" value="UvrC_RNaseH"/>
    <property type="match status" value="1"/>
</dbReference>
<dbReference type="Pfam" id="PF08459">
    <property type="entry name" value="UvrC_RNaseH_dom"/>
    <property type="match status" value="1"/>
</dbReference>
<dbReference type="SMART" id="SM00465">
    <property type="entry name" value="GIYc"/>
    <property type="match status" value="1"/>
</dbReference>
<dbReference type="SMART" id="SM00278">
    <property type="entry name" value="HhH1"/>
    <property type="match status" value="2"/>
</dbReference>
<dbReference type="SUPFAM" id="SSF46600">
    <property type="entry name" value="C-terminal UvrC-binding domain of UvrB"/>
    <property type="match status" value="1"/>
</dbReference>
<dbReference type="SUPFAM" id="SSF82771">
    <property type="entry name" value="GIY-YIG endonuclease"/>
    <property type="match status" value="1"/>
</dbReference>
<dbReference type="SUPFAM" id="SSF47781">
    <property type="entry name" value="RuvA domain 2-like"/>
    <property type="match status" value="1"/>
</dbReference>
<dbReference type="PROSITE" id="PS50164">
    <property type="entry name" value="GIY_YIG"/>
    <property type="match status" value="1"/>
</dbReference>
<dbReference type="PROSITE" id="PS50151">
    <property type="entry name" value="UVR"/>
    <property type="match status" value="1"/>
</dbReference>
<dbReference type="PROSITE" id="PS50165">
    <property type="entry name" value="UVRC"/>
    <property type="match status" value="1"/>
</dbReference>
<reference key="1">
    <citation type="submission" date="2003-03" db="EMBL/GenBank/DDBJ databases">
        <title>The complete genome sequence of Neisseria gonorrhoeae.</title>
        <authorList>
            <person name="Lewis L.A."/>
            <person name="Gillaspy A.F."/>
            <person name="McLaughlin R.E."/>
            <person name="Gipson M."/>
            <person name="Ducey T.F."/>
            <person name="Ownbey T."/>
            <person name="Hartman K."/>
            <person name="Nydick C."/>
            <person name="Carson M.B."/>
            <person name="Vaughn J."/>
            <person name="Thomson C."/>
            <person name="Song L."/>
            <person name="Lin S."/>
            <person name="Yuan X."/>
            <person name="Najar F."/>
            <person name="Zhan M."/>
            <person name="Ren Q."/>
            <person name="Zhu H."/>
            <person name="Qi S."/>
            <person name="Kenton S.M."/>
            <person name="Lai H."/>
            <person name="White J.D."/>
            <person name="Clifton S."/>
            <person name="Roe B.A."/>
            <person name="Dyer D.W."/>
        </authorList>
    </citation>
    <scope>NUCLEOTIDE SEQUENCE [LARGE SCALE GENOMIC DNA]</scope>
    <source>
        <strain>ATCC 700825 / FA 1090</strain>
    </source>
</reference>
<protein>
    <recommendedName>
        <fullName evidence="1">UvrABC system protein C</fullName>
        <shortName evidence="1">Protein UvrC</shortName>
    </recommendedName>
    <alternativeName>
        <fullName evidence="1">Excinuclease ABC subunit C</fullName>
    </alternativeName>
</protein>
<sequence>MNTENRSPEQFDIPLFLKNLPKLPGVYRFFDEGGNVLYVGKAVNLKRRVSGYFQKNDHSPRIALMVKQVRHIETTITRSEAEALILENNFIKALSPKYNILFRDDKSYPYLMLSGHQYPQMAYYRGTLKNPNQYFGPYPNSNAVRDSIQVLQKVFMLRTCEDSVFEHRDRPCLLYQIKRCTAPCVGHISEEDYCDSVRQAATFLNGKTDELTRTLQHKMQTAAANLQFEEAARYRDQIQALGIIQSNQFIDSKNPNNPNDIDLLALAVSDGLVCVHWVSIRGGRHVGDKSFFPDTKNDPEPNGQDYAEAFVAQHYLGKSKPDIIISNFPVPDALKEALEGEHGKQMQFVTKTIGERKVWLKMAEQNAQMAITQRHLQQSNQQHRIDELAKILGMNSDGINRLECFDISHTQGEATIASCVVYDEQNIQPSQYRRYNITTAKPGDDYAAMREVLTRRYGKIQEAEANGESVKWPDVVLIDGGKGQIGVAVSVWEELGLHIPLVGIAKGPERKAGMEELILPFTGELFRLPPNSPALHLLQTVRDESHRFAITGHRKKRDKARVTSSLGDIPGVGSKRRQALLTRFGGLRGVIAASREDLEKVEGISKALAETIYNHLH</sequence>
<comment type="function">
    <text evidence="1">The UvrABC repair system catalyzes the recognition and processing of DNA lesions. UvrC both incises the 5' and 3' sides of the lesion. The N-terminal half is responsible for the 3' incision and the C-terminal half is responsible for the 5' incision.</text>
</comment>
<comment type="subunit">
    <text evidence="1">Interacts with UvrB in an incision complex.</text>
</comment>
<comment type="subcellular location">
    <subcellularLocation>
        <location evidence="1">Cytoplasm</location>
    </subcellularLocation>
</comment>
<comment type="similarity">
    <text evidence="1">Belongs to the UvrC family.</text>
</comment>
<comment type="sequence caution" evidence="2">
    <conflict type="erroneous initiation">
        <sequence resource="EMBL-CDS" id="AAW89309"/>
    </conflict>
</comment>
<proteinExistence type="inferred from homology"/>
<gene>
    <name evidence="1" type="primary">uvrC</name>
    <name type="ordered locus">NGO_0578</name>
</gene>
<organism>
    <name type="scientific">Neisseria gonorrhoeae (strain ATCC 700825 / FA 1090)</name>
    <dbReference type="NCBI Taxonomy" id="242231"/>
    <lineage>
        <taxon>Bacteria</taxon>
        <taxon>Pseudomonadati</taxon>
        <taxon>Pseudomonadota</taxon>
        <taxon>Betaproteobacteria</taxon>
        <taxon>Neisseriales</taxon>
        <taxon>Neisseriaceae</taxon>
        <taxon>Neisseria</taxon>
    </lineage>
</organism>
<keyword id="KW-0963">Cytoplasm</keyword>
<keyword id="KW-0227">DNA damage</keyword>
<keyword id="KW-0228">DNA excision</keyword>
<keyword id="KW-0234">DNA repair</keyword>
<keyword id="KW-0267">Excision nuclease</keyword>
<keyword id="KW-1185">Reference proteome</keyword>
<keyword id="KW-0742">SOS response</keyword>